<accession>P9WQG3</accession>
<accession>L0T5G1</accession>
<accession>P71539</accession>
<proteinExistence type="evidence at protein level"/>
<comment type="function">
    <text evidence="2">Has acyl-CoA dehydrogenase activity on a number of substrates. N-octanoyl-CoA is the best tested, but n-lauroyl-CoA, n-palmitoyl-CoA and isovaleryl-CoA were also used.</text>
</comment>
<comment type="catalytic activity">
    <reaction evidence="2">
        <text>a 2,3-saturated acyl-CoA + A = a 2,3-dehydroacyl-CoA + AH2</text>
        <dbReference type="Rhea" id="RHEA:48608"/>
        <dbReference type="ChEBI" id="CHEBI:13193"/>
        <dbReference type="ChEBI" id="CHEBI:17499"/>
        <dbReference type="ChEBI" id="CHEBI:60015"/>
        <dbReference type="ChEBI" id="CHEBI:65111"/>
    </reaction>
</comment>
<comment type="cofactor">
    <cofactor evidence="1">
        <name>FAD</name>
        <dbReference type="ChEBI" id="CHEBI:57692"/>
    </cofactor>
</comment>
<comment type="similarity">
    <text evidence="4">Belongs to the acyl-CoA dehydrogenase family.</text>
</comment>
<reference key="1">
    <citation type="journal article" date="1998" name="Nature">
        <title>Deciphering the biology of Mycobacterium tuberculosis from the complete genome sequence.</title>
        <authorList>
            <person name="Cole S.T."/>
            <person name="Brosch R."/>
            <person name="Parkhill J."/>
            <person name="Garnier T."/>
            <person name="Churcher C.M."/>
            <person name="Harris D.E."/>
            <person name="Gordon S.V."/>
            <person name="Eiglmeier K."/>
            <person name="Gas S."/>
            <person name="Barry C.E. III"/>
            <person name="Tekaia F."/>
            <person name="Badcock K."/>
            <person name="Basham D."/>
            <person name="Brown D."/>
            <person name="Chillingworth T."/>
            <person name="Connor R."/>
            <person name="Davies R.M."/>
            <person name="Devlin K."/>
            <person name="Feltwell T."/>
            <person name="Gentles S."/>
            <person name="Hamlin N."/>
            <person name="Holroyd S."/>
            <person name="Hornsby T."/>
            <person name="Jagels K."/>
            <person name="Krogh A."/>
            <person name="McLean J."/>
            <person name="Moule S."/>
            <person name="Murphy L.D."/>
            <person name="Oliver S."/>
            <person name="Osborne J."/>
            <person name="Quail M.A."/>
            <person name="Rajandream M.A."/>
            <person name="Rogers J."/>
            <person name="Rutter S."/>
            <person name="Seeger K."/>
            <person name="Skelton S."/>
            <person name="Squares S."/>
            <person name="Squares R."/>
            <person name="Sulston J.E."/>
            <person name="Taylor K."/>
            <person name="Whitehead S."/>
            <person name="Barrell B.G."/>
        </authorList>
    </citation>
    <scope>NUCLEOTIDE SEQUENCE [LARGE SCALE GENOMIC DNA]</scope>
    <source>
        <strain>ATCC 25618 / H37Rv</strain>
    </source>
</reference>
<reference key="2">
    <citation type="journal article" date="1998" name="Biochem. Biophys. Res. Commun.">
        <title>Cloning and expression of an acyl-CoA dehydrogenase from Mycobacterium tuberculosis.</title>
        <authorList>
            <person name="Mahadevan U."/>
            <person name="Padmanaban G."/>
        </authorList>
    </citation>
    <scope>FUNCTION AS AN ACYL-COA DEHYDROGENASE</scope>
    <scope>CATALYTIC ACTIVITY</scope>
    <scope>SUBSTRATE SPECIFICITY</scope>
    <source>
        <strain>ATCC 25618 / H37Rv</strain>
    </source>
</reference>
<reference key="3">
    <citation type="journal article" date="2011" name="Mol. Cell. Proteomics">
        <title>Proteogenomic analysis of Mycobacterium tuberculosis by high resolution mass spectrometry.</title>
        <authorList>
            <person name="Kelkar D.S."/>
            <person name="Kumar D."/>
            <person name="Kumar P."/>
            <person name="Balakrishnan L."/>
            <person name="Muthusamy B."/>
            <person name="Yadav A.K."/>
            <person name="Shrivastava P."/>
            <person name="Marimuthu A."/>
            <person name="Anand S."/>
            <person name="Sundaram H."/>
            <person name="Kingsbury R."/>
            <person name="Harsha H.C."/>
            <person name="Nair B."/>
            <person name="Prasad T.S."/>
            <person name="Chauhan D.S."/>
            <person name="Katoch K."/>
            <person name="Katoch V.M."/>
            <person name="Kumar P."/>
            <person name="Chaerkady R."/>
            <person name="Ramachandran S."/>
            <person name="Dash D."/>
            <person name="Pandey A."/>
        </authorList>
    </citation>
    <scope>IDENTIFICATION BY MASS SPECTROMETRY [LARGE SCALE ANALYSIS]</scope>
    <source>
        <strain>ATCC 25618 / H37Rv</strain>
    </source>
</reference>
<sequence>MTDTSFIESEERQALRKAVASWVANYGHEYYLDKARKHEHTSELWAEAGKLGFLGVNLPEEYGGGGAGMYELSLVMEEMAAAGSALLLMVVSPAINGTIIAKFGTDDQKKRWLPGIADGSLTMAFAITEPDAGSNSHKITTTARRDGSDWIIKGQKVFISGIDQAQAVLVVGRSEEAKTGKLRPALFVVPTDAPGFSYTPIEMELVSPERQFQVFLDDVRLPADALVGAEDAAIAQLFAGLNPERIMGAASAVGMGRFALGRAVDYVKTRKVWSTPIGAHQGLAHPLAQCHIEVELAKLMTQKAATLYDHGDDFGAAEAANMAKYAAAEASSRAVDQAVQSMGGNGLTKEYGVAAMMTSARLARIAPISREMVLNFVAQTSLGLPRSY</sequence>
<organism>
    <name type="scientific">Mycobacterium tuberculosis (strain ATCC 25618 / H37Rv)</name>
    <dbReference type="NCBI Taxonomy" id="83332"/>
    <lineage>
        <taxon>Bacteria</taxon>
        <taxon>Bacillati</taxon>
        <taxon>Actinomycetota</taxon>
        <taxon>Actinomycetes</taxon>
        <taxon>Mycobacteriales</taxon>
        <taxon>Mycobacteriaceae</taxon>
        <taxon>Mycobacterium</taxon>
        <taxon>Mycobacterium tuberculosis complex</taxon>
    </lineage>
</organism>
<keyword id="KW-0274">FAD</keyword>
<keyword id="KW-0285">Flavoprotein</keyword>
<keyword id="KW-0560">Oxidoreductase</keyword>
<keyword id="KW-1185">Reference proteome</keyword>
<feature type="chain" id="PRO_0000201185" description="Acyl-CoA dehydrogenase FadE12">
    <location>
        <begin position="1"/>
        <end position="388"/>
    </location>
</feature>
<name>ACDC_MYCTU</name>
<protein>
    <recommendedName>
        <fullName>Acyl-CoA dehydrogenase FadE12</fullName>
        <ecNumber evidence="2">1.3.99.-</ecNumber>
    </recommendedName>
    <alternativeName>
        <fullName evidence="3">Medium chain acyl-CoA dehydrogenase</fullName>
        <shortName evidence="3">MCADH</shortName>
    </alternativeName>
</protein>
<evidence type="ECO:0000250" key="1"/>
<evidence type="ECO:0000269" key="2">
    <source>
    </source>
</evidence>
<evidence type="ECO:0000303" key="3">
    <source>
    </source>
</evidence>
<evidence type="ECO:0000305" key="4"/>
<gene>
    <name type="primary">fadE12</name>
    <name type="ordered locus">Rv0972c</name>
    <name type="ORF">MTCY10D7.02</name>
</gene>
<dbReference type="EC" id="1.3.99.-" evidence="2"/>
<dbReference type="EMBL" id="AL123456">
    <property type="protein sequence ID" value="CCP43721.1"/>
    <property type="molecule type" value="Genomic_DNA"/>
</dbReference>
<dbReference type="PIR" id="B70719">
    <property type="entry name" value="B70719"/>
</dbReference>
<dbReference type="RefSeq" id="NP_215487.1">
    <property type="nucleotide sequence ID" value="NC_000962.3"/>
</dbReference>
<dbReference type="RefSeq" id="WP_003898667.1">
    <property type="nucleotide sequence ID" value="NZ_NVQJ01000001.1"/>
</dbReference>
<dbReference type="SMR" id="P9WQG3"/>
<dbReference type="FunCoup" id="P9WQG3">
    <property type="interactions" value="1"/>
</dbReference>
<dbReference type="STRING" id="83332.Rv0972c"/>
<dbReference type="PaxDb" id="83332-Rv0972c"/>
<dbReference type="DNASU" id="885237"/>
<dbReference type="GeneID" id="885237"/>
<dbReference type="KEGG" id="mtu:Rv0972c"/>
<dbReference type="KEGG" id="mtv:RVBD_0972c"/>
<dbReference type="TubercuList" id="Rv0972c"/>
<dbReference type="eggNOG" id="COG1960">
    <property type="taxonomic scope" value="Bacteria"/>
</dbReference>
<dbReference type="InParanoid" id="P9WQG3"/>
<dbReference type="OrthoDB" id="8876745at2"/>
<dbReference type="PhylomeDB" id="P9WQG3"/>
<dbReference type="Proteomes" id="UP000001584">
    <property type="component" value="Chromosome"/>
</dbReference>
<dbReference type="GO" id="GO:0005737">
    <property type="term" value="C:cytoplasm"/>
    <property type="evidence" value="ECO:0000318"/>
    <property type="project" value="GO_Central"/>
</dbReference>
<dbReference type="GO" id="GO:0005886">
    <property type="term" value="C:plasma membrane"/>
    <property type="evidence" value="ECO:0007005"/>
    <property type="project" value="MTBBASE"/>
</dbReference>
<dbReference type="GO" id="GO:0003995">
    <property type="term" value="F:acyl-CoA dehydrogenase activity"/>
    <property type="evidence" value="ECO:0000314"/>
    <property type="project" value="MTBBASE"/>
</dbReference>
<dbReference type="GO" id="GO:0050660">
    <property type="term" value="F:flavin adenine dinucleotide binding"/>
    <property type="evidence" value="ECO:0007669"/>
    <property type="project" value="InterPro"/>
</dbReference>
<dbReference type="GO" id="GO:0033539">
    <property type="term" value="P:fatty acid beta-oxidation using acyl-CoA dehydrogenase"/>
    <property type="evidence" value="ECO:0000318"/>
    <property type="project" value="GO_Central"/>
</dbReference>
<dbReference type="CDD" id="cd00567">
    <property type="entry name" value="ACAD"/>
    <property type="match status" value="1"/>
</dbReference>
<dbReference type="FunFam" id="1.10.540.10:FF:000028">
    <property type="entry name" value="Acyl-CoA dehydrogenase fadE12"/>
    <property type="match status" value="1"/>
</dbReference>
<dbReference type="FunFam" id="1.20.140.10:FF:000012">
    <property type="entry name" value="Acyl-CoA dehydrogenase fadE12"/>
    <property type="match status" value="1"/>
</dbReference>
<dbReference type="FunFam" id="2.40.110.10:FF:000002">
    <property type="entry name" value="Acyl-CoA dehydrogenase fadE12"/>
    <property type="match status" value="1"/>
</dbReference>
<dbReference type="Gene3D" id="1.10.540.10">
    <property type="entry name" value="Acyl-CoA dehydrogenase/oxidase, N-terminal domain"/>
    <property type="match status" value="1"/>
</dbReference>
<dbReference type="Gene3D" id="2.40.110.10">
    <property type="entry name" value="Butyryl-CoA Dehydrogenase, subunit A, domain 2"/>
    <property type="match status" value="1"/>
</dbReference>
<dbReference type="Gene3D" id="1.20.140.10">
    <property type="entry name" value="Butyryl-CoA Dehydrogenase, subunit A, domain 3"/>
    <property type="match status" value="1"/>
</dbReference>
<dbReference type="InterPro" id="IPR050741">
    <property type="entry name" value="Acyl-CoA_dehydrogenase"/>
</dbReference>
<dbReference type="InterPro" id="IPR006091">
    <property type="entry name" value="Acyl-CoA_Oxase/DH_mid-dom"/>
</dbReference>
<dbReference type="InterPro" id="IPR046373">
    <property type="entry name" value="Acyl-CoA_Oxase/DH_mid-dom_sf"/>
</dbReference>
<dbReference type="InterPro" id="IPR036250">
    <property type="entry name" value="AcylCo_DH-like_C"/>
</dbReference>
<dbReference type="InterPro" id="IPR009075">
    <property type="entry name" value="AcylCo_DH/oxidase_C"/>
</dbReference>
<dbReference type="InterPro" id="IPR013786">
    <property type="entry name" value="AcylCoA_DH/ox_N"/>
</dbReference>
<dbReference type="InterPro" id="IPR037069">
    <property type="entry name" value="AcylCoA_DH/ox_N_sf"/>
</dbReference>
<dbReference type="InterPro" id="IPR009100">
    <property type="entry name" value="AcylCoA_DH/oxidase_NM_dom_sf"/>
</dbReference>
<dbReference type="PANTHER" id="PTHR48083:SF1">
    <property type="entry name" value="DEHYDROGENASE, PUTATIVE (AFU_ORTHOLOGUE AFUA_7G06510)-RELATED"/>
    <property type="match status" value="1"/>
</dbReference>
<dbReference type="PANTHER" id="PTHR48083">
    <property type="entry name" value="MEDIUM-CHAIN SPECIFIC ACYL-COA DEHYDROGENASE, MITOCHONDRIAL-RELATED"/>
    <property type="match status" value="1"/>
</dbReference>
<dbReference type="Pfam" id="PF00441">
    <property type="entry name" value="Acyl-CoA_dh_1"/>
    <property type="match status" value="1"/>
</dbReference>
<dbReference type="Pfam" id="PF02770">
    <property type="entry name" value="Acyl-CoA_dh_M"/>
    <property type="match status" value="1"/>
</dbReference>
<dbReference type="Pfam" id="PF02771">
    <property type="entry name" value="Acyl-CoA_dh_N"/>
    <property type="match status" value="1"/>
</dbReference>
<dbReference type="SUPFAM" id="SSF47203">
    <property type="entry name" value="Acyl-CoA dehydrogenase C-terminal domain-like"/>
    <property type="match status" value="1"/>
</dbReference>
<dbReference type="SUPFAM" id="SSF56645">
    <property type="entry name" value="Acyl-CoA dehydrogenase NM domain-like"/>
    <property type="match status" value="1"/>
</dbReference>